<keyword id="KW-0963">Cytoplasm</keyword>
<keyword id="KW-0210">Decarboxylase</keyword>
<keyword id="KW-0456">Lyase</keyword>
<keyword id="KW-0627">Porphyrin biosynthesis</keyword>
<feature type="chain" id="PRO_1000078070" description="Uroporphyrinogen decarboxylase">
    <location>
        <begin position="1"/>
        <end position="361"/>
    </location>
</feature>
<feature type="binding site" evidence="1">
    <location>
        <begin position="27"/>
        <end position="31"/>
    </location>
    <ligand>
        <name>substrate</name>
    </ligand>
</feature>
<feature type="binding site" evidence="1">
    <location>
        <position position="77"/>
    </location>
    <ligand>
        <name>substrate</name>
    </ligand>
</feature>
<feature type="binding site" evidence="1">
    <location>
        <position position="154"/>
    </location>
    <ligand>
        <name>substrate</name>
    </ligand>
</feature>
<feature type="binding site" evidence="1">
    <location>
        <position position="209"/>
    </location>
    <ligand>
        <name>substrate</name>
    </ligand>
</feature>
<feature type="binding site" evidence="1">
    <location>
        <position position="327"/>
    </location>
    <ligand>
        <name>substrate</name>
    </ligand>
</feature>
<feature type="site" description="Transition state stabilizer" evidence="1">
    <location>
        <position position="77"/>
    </location>
</feature>
<organism>
    <name type="scientific">Coxiella burnetii (strain RSA 331 / Henzerling II)</name>
    <dbReference type="NCBI Taxonomy" id="360115"/>
    <lineage>
        <taxon>Bacteria</taxon>
        <taxon>Pseudomonadati</taxon>
        <taxon>Pseudomonadota</taxon>
        <taxon>Gammaproteobacteria</taxon>
        <taxon>Legionellales</taxon>
        <taxon>Coxiellaceae</taxon>
        <taxon>Coxiella</taxon>
    </lineage>
</organism>
<reference key="1">
    <citation type="submission" date="2007-11" db="EMBL/GenBank/DDBJ databases">
        <title>Genome sequencing of phylogenetically and phenotypically diverse Coxiella burnetii isolates.</title>
        <authorList>
            <person name="Seshadri R."/>
            <person name="Samuel J.E."/>
        </authorList>
    </citation>
    <scope>NUCLEOTIDE SEQUENCE [LARGE SCALE GENOMIC DNA]</scope>
    <source>
        <strain>RSA 331 / Henzerling II</strain>
    </source>
</reference>
<protein>
    <recommendedName>
        <fullName evidence="1">Uroporphyrinogen decarboxylase</fullName>
        <shortName evidence="1">UPD</shortName>
        <shortName evidence="1">URO-D</shortName>
        <ecNumber evidence="1">4.1.1.37</ecNumber>
    </recommendedName>
</protein>
<accession>A9NB09</accession>
<evidence type="ECO:0000255" key="1">
    <source>
        <dbReference type="HAMAP-Rule" id="MF_00218"/>
    </source>
</evidence>
<sequence length="361" mass="40203">MLRLKNDRFIRALLRQPVDRTPVWIMRQAGRYLPEYRQLREKVPNFMAFCKTPELACEATLQPLRRFPLDAAIIFSDILTIPDAMGVDLHIAPTVGPVIRNPVRSAQDVNRLQMPAVEEALSYLFDAIRLTVKALDHRVPLIGFAGSPWTLACYMTEGQSSKTFLTARAMLYQQPDVFHTLLQKLTTLTIAYLNAQIKAGADVVMLFDTWGGLLTPSLYRQFSLDYLSQIAAEVVRQKNGRKIPLIFFTKNGGQWLESIANSGCDAVGLDWTTDIGQARRRVGDRVALQGNLDPAILLSNPESISTAAVDILKSYGQGSGHVFNLGHGIDPSTPIENVAALVEAVQNFSIKNEKPISSYYR</sequence>
<name>DCUP_COXBR</name>
<proteinExistence type="inferred from homology"/>
<dbReference type="EC" id="4.1.1.37" evidence="1"/>
<dbReference type="EMBL" id="CP000890">
    <property type="protein sequence ID" value="ABX78546.1"/>
    <property type="molecule type" value="Genomic_DNA"/>
</dbReference>
<dbReference type="RefSeq" id="WP_010957475.1">
    <property type="nucleotide sequence ID" value="NC_010117.1"/>
</dbReference>
<dbReference type="SMR" id="A9NB09"/>
<dbReference type="KEGG" id="cbs:COXBURSA331_A0377"/>
<dbReference type="HOGENOM" id="CLU_040933_0_0_6"/>
<dbReference type="UniPathway" id="UPA00251">
    <property type="reaction ID" value="UER00321"/>
</dbReference>
<dbReference type="GO" id="GO:0005829">
    <property type="term" value="C:cytosol"/>
    <property type="evidence" value="ECO:0007669"/>
    <property type="project" value="TreeGrafter"/>
</dbReference>
<dbReference type="GO" id="GO:0004853">
    <property type="term" value="F:uroporphyrinogen decarboxylase activity"/>
    <property type="evidence" value="ECO:0007669"/>
    <property type="project" value="UniProtKB-UniRule"/>
</dbReference>
<dbReference type="GO" id="GO:0019353">
    <property type="term" value="P:protoporphyrinogen IX biosynthetic process from glutamate"/>
    <property type="evidence" value="ECO:0007669"/>
    <property type="project" value="TreeGrafter"/>
</dbReference>
<dbReference type="CDD" id="cd00717">
    <property type="entry name" value="URO-D"/>
    <property type="match status" value="1"/>
</dbReference>
<dbReference type="FunFam" id="3.20.20.210:FF:000017">
    <property type="entry name" value="Uroporphyrinogen decarboxylase"/>
    <property type="match status" value="1"/>
</dbReference>
<dbReference type="Gene3D" id="3.20.20.210">
    <property type="match status" value="1"/>
</dbReference>
<dbReference type="HAMAP" id="MF_00218">
    <property type="entry name" value="URO_D"/>
    <property type="match status" value="1"/>
</dbReference>
<dbReference type="InterPro" id="IPR038071">
    <property type="entry name" value="UROD/MetE-like_sf"/>
</dbReference>
<dbReference type="InterPro" id="IPR006361">
    <property type="entry name" value="Uroporphyrinogen_deCO2ase_HemE"/>
</dbReference>
<dbReference type="InterPro" id="IPR000257">
    <property type="entry name" value="Uroporphyrinogen_deCOase"/>
</dbReference>
<dbReference type="NCBIfam" id="TIGR01464">
    <property type="entry name" value="hemE"/>
    <property type="match status" value="1"/>
</dbReference>
<dbReference type="PANTHER" id="PTHR21091">
    <property type="entry name" value="METHYLTETRAHYDROFOLATE:HOMOCYSTEINE METHYLTRANSFERASE RELATED"/>
    <property type="match status" value="1"/>
</dbReference>
<dbReference type="PANTHER" id="PTHR21091:SF169">
    <property type="entry name" value="UROPORPHYRINOGEN DECARBOXYLASE"/>
    <property type="match status" value="1"/>
</dbReference>
<dbReference type="Pfam" id="PF01208">
    <property type="entry name" value="URO-D"/>
    <property type="match status" value="1"/>
</dbReference>
<dbReference type="SUPFAM" id="SSF51726">
    <property type="entry name" value="UROD/MetE-like"/>
    <property type="match status" value="1"/>
</dbReference>
<dbReference type="PROSITE" id="PS00906">
    <property type="entry name" value="UROD_1"/>
    <property type="match status" value="1"/>
</dbReference>
<dbReference type="PROSITE" id="PS00907">
    <property type="entry name" value="UROD_2"/>
    <property type="match status" value="1"/>
</dbReference>
<comment type="function">
    <text evidence="1">Catalyzes the decarboxylation of four acetate groups of uroporphyrinogen-III to yield coproporphyrinogen-III.</text>
</comment>
<comment type="catalytic activity">
    <reaction evidence="1">
        <text>uroporphyrinogen III + 4 H(+) = coproporphyrinogen III + 4 CO2</text>
        <dbReference type="Rhea" id="RHEA:19865"/>
        <dbReference type="ChEBI" id="CHEBI:15378"/>
        <dbReference type="ChEBI" id="CHEBI:16526"/>
        <dbReference type="ChEBI" id="CHEBI:57308"/>
        <dbReference type="ChEBI" id="CHEBI:57309"/>
        <dbReference type="EC" id="4.1.1.37"/>
    </reaction>
</comment>
<comment type="pathway">
    <text evidence="1">Porphyrin-containing compound metabolism; protoporphyrin-IX biosynthesis; coproporphyrinogen-III from 5-aminolevulinate: step 4/4.</text>
</comment>
<comment type="subunit">
    <text evidence="1">Homodimer.</text>
</comment>
<comment type="subcellular location">
    <subcellularLocation>
        <location evidence="1">Cytoplasm</location>
    </subcellularLocation>
</comment>
<comment type="similarity">
    <text evidence="1">Belongs to the uroporphyrinogen decarboxylase family.</text>
</comment>
<gene>
    <name evidence="1" type="primary">hemE</name>
    <name type="ordered locus">COXBURSA331_A0377</name>
</gene>